<gene>
    <name evidence="1" type="primary">arnF</name>
    <name type="ordered locus">YpsIP31758_1731</name>
</gene>
<sequence>MKGYLWGGASVVLVTVAQLVLKWGMMNIPLLSLADINVQFLTMYFVQLASVMCGLMGYALSMLCWFFALRYLPLNRAYPLLSLSYALVYLGAVLLPWFNEPATLLKTLGAGFILLGIWLINIKPIKAS</sequence>
<feature type="chain" id="PRO_1000061041" description="Probable 4-amino-4-deoxy-L-arabinose-phosphoundecaprenol flippase subunit ArnF">
    <location>
        <begin position="1"/>
        <end position="128"/>
    </location>
</feature>
<feature type="topological domain" description="Cytoplasmic" evidence="1">
    <location>
        <begin position="1"/>
        <end position="10"/>
    </location>
</feature>
<feature type="transmembrane region" description="Helical" evidence="1">
    <location>
        <begin position="11"/>
        <end position="31"/>
    </location>
</feature>
<feature type="topological domain" description="Periplasmic" evidence="1">
    <location>
        <begin position="32"/>
        <end position="47"/>
    </location>
</feature>
<feature type="transmembrane region" description="Helical" evidence="1">
    <location>
        <begin position="48"/>
        <end position="68"/>
    </location>
</feature>
<feature type="topological domain" description="Cytoplasmic" evidence="1">
    <location>
        <begin position="69"/>
        <end position="77"/>
    </location>
</feature>
<feature type="transmembrane region" description="Helical" evidence="1">
    <location>
        <begin position="78"/>
        <end position="98"/>
    </location>
</feature>
<feature type="topological domain" description="Periplasmic" evidence="1">
    <location>
        <begin position="99"/>
        <end position="101"/>
    </location>
</feature>
<feature type="transmembrane region" description="Helical" evidence="1">
    <location>
        <begin position="102"/>
        <end position="122"/>
    </location>
</feature>
<feature type="topological domain" description="Cytoplasmic" evidence="1">
    <location>
        <begin position="123"/>
        <end position="128"/>
    </location>
</feature>
<protein>
    <recommendedName>
        <fullName evidence="1">Probable 4-amino-4-deoxy-L-arabinose-phosphoundecaprenol flippase subunit ArnF</fullName>
        <shortName evidence="1">L-Ara4N-phosphoundecaprenol flippase subunit ArnF</shortName>
    </recommendedName>
    <alternativeName>
        <fullName evidence="1">Undecaprenyl phosphate-aminoarabinose flippase subunit ArnF</fullName>
    </alternativeName>
</protein>
<organism>
    <name type="scientific">Yersinia pseudotuberculosis serotype O:1b (strain IP 31758)</name>
    <dbReference type="NCBI Taxonomy" id="349747"/>
    <lineage>
        <taxon>Bacteria</taxon>
        <taxon>Pseudomonadati</taxon>
        <taxon>Pseudomonadota</taxon>
        <taxon>Gammaproteobacteria</taxon>
        <taxon>Enterobacterales</taxon>
        <taxon>Yersiniaceae</taxon>
        <taxon>Yersinia</taxon>
    </lineage>
</organism>
<comment type="function">
    <text evidence="1">Translocates 4-amino-4-deoxy-L-arabinose-phosphoundecaprenol (alpha-L-Ara4N-phosphoundecaprenol) from the cytoplasmic to the periplasmic side of the inner membrane.</text>
</comment>
<comment type="pathway">
    <text evidence="1">Bacterial outer membrane biogenesis; lipopolysaccharide biosynthesis.</text>
</comment>
<comment type="subunit">
    <text evidence="1">Heterodimer of ArnE and ArnF.</text>
</comment>
<comment type="subcellular location">
    <subcellularLocation>
        <location evidence="1">Cell inner membrane</location>
        <topology evidence="1">Multi-pass membrane protein</topology>
    </subcellularLocation>
</comment>
<comment type="similarity">
    <text evidence="1">Belongs to the ArnF family.</text>
</comment>
<proteinExistence type="inferred from homology"/>
<reference key="1">
    <citation type="journal article" date="2007" name="PLoS Genet.">
        <title>The complete genome sequence of Yersinia pseudotuberculosis IP31758, the causative agent of Far East scarlet-like fever.</title>
        <authorList>
            <person name="Eppinger M."/>
            <person name="Rosovitz M.J."/>
            <person name="Fricke W.F."/>
            <person name="Rasko D.A."/>
            <person name="Kokorina G."/>
            <person name="Fayolle C."/>
            <person name="Lindler L.E."/>
            <person name="Carniel E."/>
            <person name="Ravel J."/>
        </authorList>
    </citation>
    <scope>NUCLEOTIDE SEQUENCE [LARGE SCALE GENOMIC DNA]</scope>
    <source>
        <strain>IP 31758</strain>
    </source>
</reference>
<accession>A7FHH8</accession>
<evidence type="ECO:0000255" key="1">
    <source>
        <dbReference type="HAMAP-Rule" id="MF_00538"/>
    </source>
</evidence>
<name>ARNF_YERP3</name>
<dbReference type="EMBL" id="CP000720">
    <property type="protein sequence ID" value="ABS46658.1"/>
    <property type="molecule type" value="Genomic_DNA"/>
</dbReference>
<dbReference type="RefSeq" id="WP_002211819.1">
    <property type="nucleotide sequence ID" value="NC_009708.1"/>
</dbReference>
<dbReference type="GeneID" id="57976261"/>
<dbReference type="KEGG" id="ypi:YpsIP31758_1731"/>
<dbReference type="HOGENOM" id="CLU_131462_1_0_6"/>
<dbReference type="UniPathway" id="UPA00030"/>
<dbReference type="Proteomes" id="UP000002412">
    <property type="component" value="Chromosome"/>
</dbReference>
<dbReference type="GO" id="GO:0005886">
    <property type="term" value="C:plasma membrane"/>
    <property type="evidence" value="ECO:0007669"/>
    <property type="project" value="UniProtKB-SubCell"/>
</dbReference>
<dbReference type="GO" id="GO:1901505">
    <property type="term" value="F:carbohydrate derivative transmembrane transporter activity"/>
    <property type="evidence" value="ECO:0007669"/>
    <property type="project" value="InterPro"/>
</dbReference>
<dbReference type="GO" id="GO:0009245">
    <property type="term" value="P:lipid A biosynthetic process"/>
    <property type="evidence" value="ECO:0007669"/>
    <property type="project" value="UniProtKB-UniRule"/>
</dbReference>
<dbReference type="GO" id="GO:0009103">
    <property type="term" value="P:lipopolysaccharide biosynthetic process"/>
    <property type="evidence" value="ECO:0007669"/>
    <property type="project" value="UniProtKB-UniRule"/>
</dbReference>
<dbReference type="Gene3D" id="1.10.3730.20">
    <property type="match status" value="1"/>
</dbReference>
<dbReference type="HAMAP" id="MF_00538">
    <property type="entry name" value="Flippase_ArnF"/>
    <property type="match status" value="1"/>
</dbReference>
<dbReference type="InterPro" id="IPR022832">
    <property type="entry name" value="Flippase_ArnF"/>
</dbReference>
<dbReference type="InterPro" id="IPR000390">
    <property type="entry name" value="Small_drug/metabolite_transptr"/>
</dbReference>
<dbReference type="NCBIfam" id="NF002816">
    <property type="entry name" value="PRK02971.1-2"/>
    <property type="match status" value="1"/>
</dbReference>
<dbReference type="PANTHER" id="PTHR30561:SF9">
    <property type="entry name" value="4-AMINO-4-DEOXY-L-ARABINOSE-PHOSPHOUNDECAPRENOL FLIPPASE SUBUNIT ARNF-RELATED"/>
    <property type="match status" value="1"/>
</dbReference>
<dbReference type="PANTHER" id="PTHR30561">
    <property type="entry name" value="SMR FAMILY PROTON-DEPENDENT DRUG EFFLUX TRANSPORTER SUGE"/>
    <property type="match status" value="1"/>
</dbReference>
<dbReference type="SUPFAM" id="SSF103481">
    <property type="entry name" value="Multidrug resistance efflux transporter EmrE"/>
    <property type="match status" value="1"/>
</dbReference>
<keyword id="KW-0997">Cell inner membrane</keyword>
<keyword id="KW-1003">Cell membrane</keyword>
<keyword id="KW-0441">Lipid A biosynthesis</keyword>
<keyword id="KW-0444">Lipid biosynthesis</keyword>
<keyword id="KW-0443">Lipid metabolism</keyword>
<keyword id="KW-0448">Lipopolysaccharide biosynthesis</keyword>
<keyword id="KW-0472">Membrane</keyword>
<keyword id="KW-0812">Transmembrane</keyword>
<keyword id="KW-1133">Transmembrane helix</keyword>
<keyword id="KW-0813">Transport</keyword>